<dbReference type="EMBL" id="BC150012">
    <property type="protein sequence ID" value="AAI50013.1"/>
    <property type="molecule type" value="mRNA"/>
</dbReference>
<dbReference type="RefSeq" id="NP_001093804.1">
    <property type="nucleotide sequence ID" value="NM_001100334.2"/>
</dbReference>
<dbReference type="SMR" id="A6QQV9"/>
<dbReference type="FunCoup" id="A6QQV9">
    <property type="interactions" value="282"/>
</dbReference>
<dbReference type="STRING" id="9913.ENSBTAP00000013389"/>
<dbReference type="PaxDb" id="9913-ENSBTAP00000013389"/>
<dbReference type="GeneID" id="510738"/>
<dbReference type="KEGG" id="bta:510738"/>
<dbReference type="CTD" id="134265"/>
<dbReference type="VEuPathDB" id="HostDB:ENSBTAG00000019948"/>
<dbReference type="eggNOG" id="ENOG502R3HG">
    <property type="taxonomic scope" value="Eukaryota"/>
</dbReference>
<dbReference type="HOGENOM" id="CLU_014418_1_0_1"/>
<dbReference type="InParanoid" id="A6QQV9"/>
<dbReference type="OrthoDB" id="9937741at2759"/>
<dbReference type="TreeFam" id="TF332622"/>
<dbReference type="Proteomes" id="UP000009136">
    <property type="component" value="Chromosome 7"/>
</dbReference>
<dbReference type="Bgee" id="ENSBTAG00000019948">
    <property type="expression patterns" value="Expressed in bone marrow and 99 other cell types or tissues"/>
</dbReference>
<dbReference type="GO" id="GO:0070161">
    <property type="term" value="C:anchoring junction"/>
    <property type="evidence" value="ECO:0007669"/>
    <property type="project" value="UniProtKB-KW"/>
</dbReference>
<dbReference type="GO" id="GO:0042995">
    <property type="term" value="C:cell projection"/>
    <property type="evidence" value="ECO:0007669"/>
    <property type="project" value="UniProtKB-SubCell"/>
</dbReference>
<dbReference type="GO" id="GO:0005829">
    <property type="term" value="C:cytosol"/>
    <property type="evidence" value="ECO:0000318"/>
    <property type="project" value="GO_Central"/>
</dbReference>
<dbReference type="GO" id="GO:0002102">
    <property type="term" value="C:podosome"/>
    <property type="evidence" value="ECO:0007669"/>
    <property type="project" value="UniProtKB-SubCell"/>
</dbReference>
<dbReference type="GO" id="GO:0001725">
    <property type="term" value="C:stress fiber"/>
    <property type="evidence" value="ECO:0007669"/>
    <property type="project" value="UniProtKB-SubCell"/>
</dbReference>
<dbReference type="CDD" id="cd13306">
    <property type="entry name" value="PH1_AFAP"/>
    <property type="match status" value="1"/>
</dbReference>
<dbReference type="CDD" id="cd13307">
    <property type="entry name" value="PH2_AFAP"/>
    <property type="match status" value="1"/>
</dbReference>
<dbReference type="FunFam" id="2.30.29.30:FF:000189">
    <property type="entry name" value="Actin filament associated protein 1-like 1"/>
    <property type="match status" value="1"/>
</dbReference>
<dbReference type="FunFam" id="2.30.29.30:FF:000020">
    <property type="entry name" value="Actin filament-associated protein 1-like 2 isoform 1"/>
    <property type="match status" value="1"/>
</dbReference>
<dbReference type="Gene3D" id="2.30.29.30">
    <property type="entry name" value="Pleckstrin-homology domain (PH domain)/Phosphotyrosine-binding domain (PTB)"/>
    <property type="match status" value="2"/>
</dbReference>
<dbReference type="InterPro" id="IPR030113">
    <property type="entry name" value="AFAP"/>
</dbReference>
<dbReference type="InterPro" id="IPR011993">
    <property type="entry name" value="PH-like_dom_sf"/>
</dbReference>
<dbReference type="InterPro" id="IPR001849">
    <property type="entry name" value="PH_domain"/>
</dbReference>
<dbReference type="PANTHER" id="PTHR14338">
    <property type="entry name" value="ACTIN FILAMENT-ASSOCIATED PROTEIN 1 FAMILY MEMBER"/>
    <property type="match status" value="1"/>
</dbReference>
<dbReference type="PANTHER" id="PTHR14338:SF1">
    <property type="entry name" value="ACTIN FILAMENT-ASSOCIATED PROTEIN 1-LIKE 1"/>
    <property type="match status" value="1"/>
</dbReference>
<dbReference type="Pfam" id="PF00169">
    <property type="entry name" value="PH"/>
    <property type="match status" value="2"/>
</dbReference>
<dbReference type="SMART" id="SM00233">
    <property type="entry name" value="PH"/>
    <property type="match status" value="2"/>
</dbReference>
<dbReference type="SUPFAM" id="SSF50729">
    <property type="entry name" value="PH domain-like"/>
    <property type="match status" value="2"/>
</dbReference>
<dbReference type="PROSITE" id="PS50003">
    <property type="entry name" value="PH_DOMAIN"/>
    <property type="match status" value="2"/>
</dbReference>
<accession>A6QQV9</accession>
<comment type="function">
    <text evidence="1">May be involved in podosome and invadosome formation.</text>
</comment>
<comment type="subunit">
    <text evidence="1">Interacts with CTTN.</text>
</comment>
<comment type="subcellular location">
    <subcellularLocation>
        <location evidence="4">Cytoplasm</location>
    </subcellularLocation>
    <subcellularLocation>
        <location evidence="4">Cell projection</location>
        <location evidence="4">Podosome</location>
    </subcellularLocation>
    <subcellularLocation>
        <location evidence="4">Cell projection</location>
        <location evidence="4">Invadopodium</location>
    </subcellularLocation>
    <subcellularLocation>
        <location evidence="4">Cytoplasm</location>
        <location evidence="4">Cytoskeleton</location>
        <location evidence="4">Stress fiber</location>
    </subcellularLocation>
</comment>
<gene>
    <name type="primary">AFAP1L1</name>
</gene>
<proteinExistence type="evidence at transcript level"/>
<sequence length="763" mass="85931">MDRGRVLEQLLPELTGLLSLLDHEYLSDTTLEKKMAVASILQSLQPLPAKEVSYLYVNTADLHSGPSFVESLFEEFDCDLSGLQDMPEDEAESCKAASPEPAKSPSLRHTADLPPPLPNRPPPEDYYEEALPLGPGKSPEYISSHNGCSPAHSLMDGYYEDADSSYPATRMNGELKNSYNDSDAMSSSYESYDEEEEEGKGPQPTHQWPSEEASMHLVRDCRICAFLLRKKRFGQWAKQLTVIKEDQLLCYKSSKDRQPHLRLALDVCSVIYVPKDSRHKRHELRFAQGATEVLVLALQSREQAEEWLKVIREVSKPVGGTEGADVPRSPVLLCKADLDKRLSQEKQTSDSDSLGMGDSCSTLGREHGKGKKSSLSELKGSMSRAAGRKITRIISFSKKKALADDLQASSTEEVPCCGYLNVLVNHGWKERWCRLKCNTLYFHKDRTDLRTHVNAIALRGCEVAPGFGPRHPFAFRILHNRQEVAILEASCSEDMGRWLGLLLVEMGSKVTPEALHYDYVDVETLTSIVSAGRNSFLYARSCQDQWPEPRVYDDVPYEKMQDEEPERPPGAQVKRHASTCSEKSHRVDPQVKVKRHASSAHQYKYGKNRAEEDARRYLVEKEKLEKEKETIRTELMALRQEKRELKEAIRNNPGAKLKALEEALATLEAQCRAKEEHRIDLELRLVTVKERLQQSLAGGPALGLSVNSKIKSGETANKPQNNVPEQPLPVNCVSELRKRSPSIINSNQGRVLQKAKEWEMKKT</sequence>
<feature type="chain" id="PRO_0000317657" description="Actin filament-associated protein 1-like 1">
    <location>
        <begin position="1"/>
        <end position="763"/>
    </location>
</feature>
<feature type="domain" description="PH 1" evidence="6">
    <location>
        <begin position="220"/>
        <end position="316"/>
    </location>
</feature>
<feature type="domain" description="PH 2" evidence="6">
    <location>
        <begin position="413"/>
        <end position="507"/>
    </location>
</feature>
<feature type="region of interest" description="Disordered" evidence="7">
    <location>
        <begin position="83"/>
        <end position="137"/>
    </location>
</feature>
<feature type="region of interest" description="Disordered" evidence="7">
    <location>
        <begin position="169"/>
        <end position="210"/>
    </location>
</feature>
<feature type="region of interest" description="Disordered" evidence="7">
    <location>
        <begin position="343"/>
        <end position="380"/>
    </location>
</feature>
<feature type="region of interest" description="Disordered" evidence="7">
    <location>
        <begin position="561"/>
        <end position="604"/>
    </location>
</feature>
<feature type="region of interest" description="Disordered" evidence="7">
    <location>
        <begin position="712"/>
        <end position="763"/>
    </location>
</feature>
<feature type="coiled-coil region" evidence="5">
    <location>
        <begin position="606"/>
        <end position="694"/>
    </location>
</feature>
<feature type="compositionally biased region" description="Polar residues" evidence="7">
    <location>
        <begin position="175"/>
        <end position="185"/>
    </location>
</feature>
<feature type="compositionally biased region" description="Basic and acidic residues" evidence="7">
    <location>
        <begin position="582"/>
        <end position="591"/>
    </location>
</feature>
<feature type="compositionally biased region" description="Polar residues" evidence="7">
    <location>
        <begin position="712"/>
        <end position="724"/>
    </location>
</feature>
<feature type="compositionally biased region" description="Basic and acidic residues" evidence="7">
    <location>
        <begin position="754"/>
        <end position="763"/>
    </location>
</feature>
<feature type="modified residue" description="Phosphoserine" evidence="2">
    <location>
        <position position="98"/>
    </location>
</feature>
<feature type="modified residue" description="Phosphoserine" evidence="2">
    <location>
        <position position="104"/>
    </location>
</feature>
<feature type="modified residue" description="Phosphoserine" evidence="3">
    <location>
        <position position="153"/>
    </location>
</feature>
<feature type="modified residue" description="Phosphoserine" evidence="3">
    <location>
        <position position="329"/>
    </location>
</feature>
<feature type="modified residue" description="Phosphoserine" evidence="3">
    <location>
        <position position="343"/>
    </location>
</feature>
<feature type="modified residue" description="Phosphotyrosine" evidence="3">
    <location>
        <position position="552"/>
    </location>
</feature>
<feature type="modified residue" description="Phosphoserine" evidence="3">
    <location>
        <position position="742"/>
    </location>
</feature>
<evidence type="ECO:0000250" key="1"/>
<evidence type="ECO:0000250" key="2">
    <source>
        <dbReference type="UniProtKB" id="D4AB98"/>
    </source>
</evidence>
<evidence type="ECO:0000250" key="3">
    <source>
        <dbReference type="UniProtKB" id="Q8BZI0"/>
    </source>
</evidence>
<evidence type="ECO:0000250" key="4">
    <source>
        <dbReference type="UniProtKB" id="Q8TED9"/>
    </source>
</evidence>
<evidence type="ECO:0000255" key="5"/>
<evidence type="ECO:0000255" key="6">
    <source>
        <dbReference type="PROSITE-ProRule" id="PRU00145"/>
    </source>
</evidence>
<evidence type="ECO:0000256" key="7">
    <source>
        <dbReference type="SAM" id="MobiDB-lite"/>
    </source>
</evidence>
<keyword id="KW-0965">Cell junction</keyword>
<keyword id="KW-0966">Cell projection</keyword>
<keyword id="KW-0175">Coiled coil</keyword>
<keyword id="KW-0963">Cytoplasm</keyword>
<keyword id="KW-0206">Cytoskeleton</keyword>
<keyword id="KW-0597">Phosphoprotein</keyword>
<keyword id="KW-1185">Reference proteome</keyword>
<keyword id="KW-0677">Repeat</keyword>
<protein>
    <recommendedName>
        <fullName>Actin filament-associated protein 1-like 1</fullName>
        <shortName>AFAP1-like protein 1</shortName>
    </recommendedName>
</protein>
<name>AF1L1_BOVIN</name>
<reference key="1">
    <citation type="submission" date="2007-07" db="EMBL/GenBank/DDBJ databases">
        <authorList>
            <consortium name="NIH - Mammalian Gene Collection (MGC) project"/>
        </authorList>
    </citation>
    <scope>NUCLEOTIDE SEQUENCE [LARGE SCALE MRNA]</scope>
    <source>
        <strain>Hereford</strain>
        <tissue>Thymus</tissue>
    </source>
</reference>
<organism>
    <name type="scientific">Bos taurus</name>
    <name type="common">Bovine</name>
    <dbReference type="NCBI Taxonomy" id="9913"/>
    <lineage>
        <taxon>Eukaryota</taxon>
        <taxon>Metazoa</taxon>
        <taxon>Chordata</taxon>
        <taxon>Craniata</taxon>
        <taxon>Vertebrata</taxon>
        <taxon>Euteleostomi</taxon>
        <taxon>Mammalia</taxon>
        <taxon>Eutheria</taxon>
        <taxon>Laurasiatheria</taxon>
        <taxon>Artiodactyla</taxon>
        <taxon>Ruminantia</taxon>
        <taxon>Pecora</taxon>
        <taxon>Bovidae</taxon>
        <taxon>Bovinae</taxon>
        <taxon>Bos</taxon>
    </lineage>
</organism>